<sequence>MIRGVRGTLVAKRSGEVLVDVQGVTFRVQTSATTLQELGEPGDLVSLVTHLIVREDELALYGFATEAELELFLSLLAVSGVGPRGALNLLSLAAPDRLTEWIRGERIEELARAPGIGKKTASRIVLELRGRLPALTEVQAGEPIDQELVAALQALGYTAQEARQAATHPEVRRAPSLEERIVAALRQLAPP</sequence>
<name>RUVA_THERP</name>
<evidence type="ECO:0000255" key="1">
    <source>
        <dbReference type="HAMAP-Rule" id="MF_00031"/>
    </source>
</evidence>
<keyword id="KW-0963">Cytoplasm</keyword>
<keyword id="KW-0227">DNA damage</keyword>
<keyword id="KW-0233">DNA recombination</keyword>
<keyword id="KW-0234">DNA repair</keyword>
<keyword id="KW-0238">DNA-binding</keyword>
<keyword id="KW-1185">Reference proteome</keyword>
<organism>
    <name type="scientific">Thermomicrobium roseum (strain ATCC 27502 / DSM 5159 / P-2)</name>
    <dbReference type="NCBI Taxonomy" id="309801"/>
    <lineage>
        <taxon>Bacteria</taxon>
        <taxon>Pseudomonadati</taxon>
        <taxon>Thermomicrobiota</taxon>
        <taxon>Thermomicrobia</taxon>
        <taxon>Thermomicrobiales</taxon>
        <taxon>Thermomicrobiaceae</taxon>
        <taxon>Thermomicrobium</taxon>
    </lineage>
</organism>
<protein>
    <recommendedName>
        <fullName evidence="1">Holliday junction branch migration complex subunit RuvA</fullName>
    </recommendedName>
</protein>
<proteinExistence type="inferred from homology"/>
<gene>
    <name evidence="1" type="primary">ruvA</name>
    <name type="ordered locus">trd_0636</name>
</gene>
<feature type="chain" id="PRO_1000195178" description="Holliday junction branch migration complex subunit RuvA">
    <location>
        <begin position="1"/>
        <end position="191"/>
    </location>
</feature>
<feature type="region of interest" description="Domain I" evidence="1">
    <location>
        <begin position="1"/>
        <end position="64"/>
    </location>
</feature>
<feature type="region of interest" description="Domain II" evidence="1">
    <location>
        <begin position="65"/>
        <end position="136"/>
    </location>
</feature>
<feature type="region of interest" description="Flexible linker" evidence="1">
    <location>
        <begin position="136"/>
        <end position="139"/>
    </location>
</feature>
<feature type="region of interest" description="Domain III" evidence="1">
    <location>
        <begin position="140"/>
        <end position="191"/>
    </location>
</feature>
<accession>B9KYT2</accession>
<reference key="1">
    <citation type="journal article" date="2009" name="PLoS ONE">
        <title>Complete genome sequence of the aerobic CO-oxidizing thermophile Thermomicrobium roseum.</title>
        <authorList>
            <person name="Wu D."/>
            <person name="Raymond J."/>
            <person name="Wu M."/>
            <person name="Chatterji S."/>
            <person name="Ren Q."/>
            <person name="Graham J.E."/>
            <person name="Bryant D.A."/>
            <person name="Robb F."/>
            <person name="Colman A."/>
            <person name="Tallon L.J."/>
            <person name="Badger J.H."/>
            <person name="Madupu R."/>
            <person name="Ward N.L."/>
            <person name="Eisen J.A."/>
        </authorList>
    </citation>
    <scope>NUCLEOTIDE SEQUENCE [LARGE SCALE GENOMIC DNA]</scope>
    <source>
        <strain>ATCC 27502 / DSM 5159 / P-2</strain>
    </source>
</reference>
<comment type="function">
    <text evidence="1">The RuvA-RuvB-RuvC complex processes Holliday junction (HJ) DNA during genetic recombination and DNA repair, while the RuvA-RuvB complex plays an important role in the rescue of blocked DNA replication forks via replication fork reversal (RFR). RuvA specifically binds to HJ cruciform DNA, conferring on it an open structure. The RuvB hexamer acts as an ATP-dependent pump, pulling dsDNA into and through the RuvAB complex. HJ branch migration allows RuvC to scan DNA until it finds its consensus sequence, where it cleaves and resolves the cruciform DNA.</text>
</comment>
<comment type="subunit">
    <text evidence="1">Homotetramer. Forms an RuvA(8)-RuvB(12)-Holliday junction (HJ) complex. HJ DNA is sandwiched between 2 RuvA tetramers; dsDNA enters through RuvA and exits via RuvB. An RuvB hexamer assembles on each DNA strand where it exits the tetramer. Each RuvB hexamer is contacted by two RuvA subunits (via domain III) on 2 adjacent RuvB subunits; this complex drives branch migration. In the full resolvosome a probable DNA-RuvA(4)-RuvB(12)-RuvC(2) complex forms which resolves the HJ.</text>
</comment>
<comment type="subcellular location">
    <subcellularLocation>
        <location evidence="1">Cytoplasm</location>
    </subcellularLocation>
</comment>
<comment type="domain">
    <text evidence="1">Has three domains with a flexible linker between the domains II and III and assumes an 'L' shape. Domain III is highly mobile and contacts RuvB.</text>
</comment>
<comment type="similarity">
    <text evidence="1">Belongs to the RuvA family.</text>
</comment>
<dbReference type="EMBL" id="CP001275">
    <property type="protein sequence ID" value="ACM05448.1"/>
    <property type="molecule type" value="Genomic_DNA"/>
</dbReference>
<dbReference type="RefSeq" id="WP_012642032.1">
    <property type="nucleotide sequence ID" value="NC_011959.1"/>
</dbReference>
<dbReference type="SMR" id="B9KYT2"/>
<dbReference type="STRING" id="309801.trd_0636"/>
<dbReference type="KEGG" id="tro:trd_0636"/>
<dbReference type="eggNOG" id="COG0632">
    <property type="taxonomic scope" value="Bacteria"/>
</dbReference>
<dbReference type="HOGENOM" id="CLU_087936_2_1_0"/>
<dbReference type="OrthoDB" id="5293449at2"/>
<dbReference type="Proteomes" id="UP000000447">
    <property type="component" value="Chromosome"/>
</dbReference>
<dbReference type="GO" id="GO:0005737">
    <property type="term" value="C:cytoplasm"/>
    <property type="evidence" value="ECO:0007669"/>
    <property type="project" value="UniProtKB-SubCell"/>
</dbReference>
<dbReference type="GO" id="GO:0009379">
    <property type="term" value="C:Holliday junction helicase complex"/>
    <property type="evidence" value="ECO:0007669"/>
    <property type="project" value="InterPro"/>
</dbReference>
<dbReference type="GO" id="GO:0048476">
    <property type="term" value="C:Holliday junction resolvase complex"/>
    <property type="evidence" value="ECO:0007669"/>
    <property type="project" value="UniProtKB-UniRule"/>
</dbReference>
<dbReference type="GO" id="GO:0005524">
    <property type="term" value="F:ATP binding"/>
    <property type="evidence" value="ECO:0007669"/>
    <property type="project" value="InterPro"/>
</dbReference>
<dbReference type="GO" id="GO:0000400">
    <property type="term" value="F:four-way junction DNA binding"/>
    <property type="evidence" value="ECO:0007669"/>
    <property type="project" value="UniProtKB-UniRule"/>
</dbReference>
<dbReference type="GO" id="GO:0009378">
    <property type="term" value="F:four-way junction helicase activity"/>
    <property type="evidence" value="ECO:0007669"/>
    <property type="project" value="InterPro"/>
</dbReference>
<dbReference type="GO" id="GO:0006310">
    <property type="term" value="P:DNA recombination"/>
    <property type="evidence" value="ECO:0007669"/>
    <property type="project" value="UniProtKB-UniRule"/>
</dbReference>
<dbReference type="GO" id="GO:0006281">
    <property type="term" value="P:DNA repair"/>
    <property type="evidence" value="ECO:0007669"/>
    <property type="project" value="UniProtKB-UniRule"/>
</dbReference>
<dbReference type="CDD" id="cd14332">
    <property type="entry name" value="UBA_RuvA_C"/>
    <property type="match status" value="1"/>
</dbReference>
<dbReference type="Gene3D" id="1.10.150.20">
    <property type="entry name" value="5' to 3' exonuclease, C-terminal subdomain"/>
    <property type="match status" value="1"/>
</dbReference>
<dbReference type="Gene3D" id="1.10.8.10">
    <property type="entry name" value="DNA helicase RuvA subunit, C-terminal domain"/>
    <property type="match status" value="1"/>
</dbReference>
<dbReference type="Gene3D" id="2.40.50.140">
    <property type="entry name" value="Nucleic acid-binding proteins"/>
    <property type="match status" value="1"/>
</dbReference>
<dbReference type="HAMAP" id="MF_00031">
    <property type="entry name" value="DNA_HJ_migration_RuvA"/>
    <property type="match status" value="1"/>
</dbReference>
<dbReference type="InterPro" id="IPR013849">
    <property type="entry name" value="DNA_helicase_Holl-junc_RuvA_I"/>
</dbReference>
<dbReference type="InterPro" id="IPR003583">
    <property type="entry name" value="Hlx-hairpin-Hlx_DNA-bd_motif"/>
</dbReference>
<dbReference type="InterPro" id="IPR012340">
    <property type="entry name" value="NA-bd_OB-fold"/>
</dbReference>
<dbReference type="InterPro" id="IPR000085">
    <property type="entry name" value="RuvA"/>
</dbReference>
<dbReference type="InterPro" id="IPR010994">
    <property type="entry name" value="RuvA_2-like"/>
</dbReference>
<dbReference type="InterPro" id="IPR011114">
    <property type="entry name" value="RuvA_C"/>
</dbReference>
<dbReference type="InterPro" id="IPR036267">
    <property type="entry name" value="RuvA_C_sf"/>
</dbReference>
<dbReference type="NCBIfam" id="TIGR00084">
    <property type="entry name" value="ruvA"/>
    <property type="match status" value="1"/>
</dbReference>
<dbReference type="Pfam" id="PF14520">
    <property type="entry name" value="HHH_5"/>
    <property type="match status" value="1"/>
</dbReference>
<dbReference type="Pfam" id="PF07499">
    <property type="entry name" value="RuvA_C"/>
    <property type="match status" value="1"/>
</dbReference>
<dbReference type="Pfam" id="PF01330">
    <property type="entry name" value="RuvA_N"/>
    <property type="match status" value="1"/>
</dbReference>
<dbReference type="SMART" id="SM00278">
    <property type="entry name" value="HhH1"/>
    <property type="match status" value="2"/>
</dbReference>
<dbReference type="SUPFAM" id="SSF46929">
    <property type="entry name" value="DNA helicase RuvA subunit, C-terminal domain"/>
    <property type="match status" value="1"/>
</dbReference>
<dbReference type="SUPFAM" id="SSF50249">
    <property type="entry name" value="Nucleic acid-binding proteins"/>
    <property type="match status" value="1"/>
</dbReference>
<dbReference type="SUPFAM" id="SSF47781">
    <property type="entry name" value="RuvA domain 2-like"/>
    <property type="match status" value="1"/>
</dbReference>